<dbReference type="EMBL" id="CP000926">
    <property type="protein sequence ID" value="ABY96866.1"/>
    <property type="molecule type" value="Genomic_DNA"/>
</dbReference>
<dbReference type="SMR" id="B0KQH8"/>
<dbReference type="KEGG" id="ppg:PputGB1_0956"/>
<dbReference type="eggNOG" id="COG1660">
    <property type="taxonomic scope" value="Bacteria"/>
</dbReference>
<dbReference type="HOGENOM" id="CLU_059558_1_1_6"/>
<dbReference type="Proteomes" id="UP000002157">
    <property type="component" value="Chromosome"/>
</dbReference>
<dbReference type="GO" id="GO:0005524">
    <property type="term" value="F:ATP binding"/>
    <property type="evidence" value="ECO:0007669"/>
    <property type="project" value="UniProtKB-UniRule"/>
</dbReference>
<dbReference type="GO" id="GO:0005525">
    <property type="term" value="F:GTP binding"/>
    <property type="evidence" value="ECO:0007669"/>
    <property type="project" value="UniProtKB-UniRule"/>
</dbReference>
<dbReference type="Gene3D" id="3.40.50.300">
    <property type="entry name" value="P-loop containing nucleotide triphosphate hydrolases"/>
    <property type="match status" value="1"/>
</dbReference>
<dbReference type="HAMAP" id="MF_00636">
    <property type="entry name" value="RapZ_like"/>
    <property type="match status" value="1"/>
</dbReference>
<dbReference type="InterPro" id="IPR027417">
    <property type="entry name" value="P-loop_NTPase"/>
</dbReference>
<dbReference type="InterPro" id="IPR005337">
    <property type="entry name" value="RapZ-like"/>
</dbReference>
<dbReference type="InterPro" id="IPR053930">
    <property type="entry name" value="RapZ-like_N"/>
</dbReference>
<dbReference type="InterPro" id="IPR053931">
    <property type="entry name" value="RapZ_C"/>
</dbReference>
<dbReference type="NCBIfam" id="NF003828">
    <property type="entry name" value="PRK05416.1"/>
    <property type="match status" value="1"/>
</dbReference>
<dbReference type="PANTHER" id="PTHR30448">
    <property type="entry name" value="RNASE ADAPTER PROTEIN RAPZ"/>
    <property type="match status" value="1"/>
</dbReference>
<dbReference type="PANTHER" id="PTHR30448:SF0">
    <property type="entry name" value="RNASE ADAPTER PROTEIN RAPZ"/>
    <property type="match status" value="1"/>
</dbReference>
<dbReference type="Pfam" id="PF22740">
    <property type="entry name" value="PapZ_C"/>
    <property type="match status" value="1"/>
</dbReference>
<dbReference type="Pfam" id="PF03668">
    <property type="entry name" value="RapZ-like_N"/>
    <property type="match status" value="1"/>
</dbReference>
<dbReference type="PIRSF" id="PIRSF005052">
    <property type="entry name" value="P-loopkin"/>
    <property type="match status" value="1"/>
</dbReference>
<dbReference type="SUPFAM" id="SSF52540">
    <property type="entry name" value="P-loop containing nucleoside triphosphate hydrolases"/>
    <property type="match status" value="1"/>
</dbReference>
<gene>
    <name type="ordered locus">PputGB1_0956</name>
</gene>
<reference key="1">
    <citation type="submission" date="2008-01" db="EMBL/GenBank/DDBJ databases">
        <title>Complete sequence of Pseudomonas putida GB-1.</title>
        <authorList>
            <consortium name="US DOE Joint Genome Institute"/>
            <person name="Copeland A."/>
            <person name="Lucas S."/>
            <person name="Lapidus A."/>
            <person name="Barry K."/>
            <person name="Glavina del Rio T."/>
            <person name="Dalin E."/>
            <person name="Tice H."/>
            <person name="Pitluck S."/>
            <person name="Bruce D."/>
            <person name="Goodwin L."/>
            <person name="Chertkov O."/>
            <person name="Brettin T."/>
            <person name="Detter J.C."/>
            <person name="Han C."/>
            <person name="Kuske C.R."/>
            <person name="Schmutz J."/>
            <person name="Larimer F."/>
            <person name="Land M."/>
            <person name="Hauser L."/>
            <person name="Kyrpides N."/>
            <person name="Kim E."/>
            <person name="McCarthy J.K."/>
            <person name="Richardson P."/>
        </authorList>
    </citation>
    <scope>NUCLEOTIDE SEQUENCE [LARGE SCALE GENOMIC DNA]</scope>
    <source>
        <strain>GB-1</strain>
    </source>
</reference>
<protein>
    <recommendedName>
        <fullName evidence="1">Nucleotide-binding protein PputGB1_0956</fullName>
    </recommendedName>
</protein>
<accession>B0KQH8</accession>
<keyword id="KW-0067">ATP-binding</keyword>
<keyword id="KW-0342">GTP-binding</keyword>
<keyword id="KW-0547">Nucleotide-binding</keyword>
<comment type="function">
    <text evidence="1">Displays ATPase and GTPase activities.</text>
</comment>
<comment type="similarity">
    <text evidence="1">Belongs to the RapZ-like family.</text>
</comment>
<proteinExistence type="inferred from homology"/>
<feature type="chain" id="PRO_1000082661" description="Nucleotide-binding protein PputGB1_0956">
    <location>
        <begin position="1"/>
        <end position="284"/>
    </location>
</feature>
<feature type="binding site" evidence="1">
    <location>
        <begin position="8"/>
        <end position="15"/>
    </location>
    <ligand>
        <name>ATP</name>
        <dbReference type="ChEBI" id="CHEBI:30616"/>
    </ligand>
</feature>
<feature type="binding site" evidence="1">
    <location>
        <begin position="60"/>
        <end position="63"/>
    </location>
    <ligand>
        <name>GTP</name>
        <dbReference type="ChEBI" id="CHEBI:37565"/>
    </ligand>
</feature>
<name>Y956_PSEPG</name>
<evidence type="ECO:0000255" key="1">
    <source>
        <dbReference type="HAMAP-Rule" id="MF_00636"/>
    </source>
</evidence>
<sequence length="284" mass="32026">MRLIIVSGRSGSGKSTALDVLEDNGFYCIDNLPAGLLPQLAEDALINTELLQPKVAVSIDARNLPSHLTRFPELLEEARARNIQCDVLFLDADEDMLLKRFSETRRRHPLTNANRSLAEAIRVESDLLGPIADLADLKIDTTNLNLYQLRDSIKLRLLNQPEPGTAFLVESFGFKRGMPVDADLVFDVRCLPNPYWKPELREHSGLDQPVIDYLAAQPDVEDMYNDISGYLLKWLPRFAASNRAYVTIAIGCTGGHHRSVYITERLGQHLQQTLKNVQVRHRDL</sequence>
<organism>
    <name type="scientific">Pseudomonas putida (strain GB-1)</name>
    <dbReference type="NCBI Taxonomy" id="76869"/>
    <lineage>
        <taxon>Bacteria</taxon>
        <taxon>Pseudomonadati</taxon>
        <taxon>Pseudomonadota</taxon>
        <taxon>Gammaproteobacteria</taxon>
        <taxon>Pseudomonadales</taxon>
        <taxon>Pseudomonadaceae</taxon>
        <taxon>Pseudomonas</taxon>
    </lineage>
</organism>